<accession>A5U2F4</accession>
<keyword id="KW-1003">Cell membrane</keyword>
<keyword id="KW-0350">Heme biosynthesis</keyword>
<keyword id="KW-0472">Membrane</keyword>
<keyword id="KW-1185">Reference proteome</keyword>
<keyword id="KW-0808">Transferase</keyword>
<keyword id="KW-0812">Transmembrane</keyword>
<keyword id="KW-1133">Transmembrane helix</keyword>
<evidence type="ECO:0000255" key="1">
    <source>
        <dbReference type="HAMAP-Rule" id="MF_00154"/>
    </source>
</evidence>
<feature type="chain" id="PRO_0000327091" description="Protoheme IX farnesyltransferase">
    <location>
        <begin position="1"/>
        <end position="308"/>
    </location>
</feature>
<feature type="transmembrane region" description="Helical" evidence="1">
    <location>
        <begin position="20"/>
        <end position="40"/>
    </location>
</feature>
<feature type="transmembrane region" description="Helical" evidence="1">
    <location>
        <begin position="50"/>
        <end position="70"/>
    </location>
</feature>
<feature type="transmembrane region" description="Helical" evidence="1">
    <location>
        <begin position="102"/>
        <end position="122"/>
    </location>
</feature>
<feature type="transmembrane region" description="Helical" evidence="1">
    <location>
        <begin position="124"/>
        <end position="144"/>
    </location>
</feature>
<feature type="transmembrane region" description="Helical" evidence="1">
    <location>
        <begin position="149"/>
        <end position="169"/>
    </location>
</feature>
<feature type="transmembrane region" description="Helical" evidence="1">
    <location>
        <begin position="170"/>
        <end position="190"/>
    </location>
</feature>
<feature type="transmembrane region" description="Helical" evidence="1">
    <location>
        <begin position="227"/>
        <end position="249"/>
    </location>
</feature>
<feature type="transmembrane region" description="Helical" evidence="1">
    <location>
        <begin position="288"/>
        <end position="308"/>
    </location>
</feature>
<comment type="function">
    <text evidence="1">Converts heme B (protoheme IX) to heme O by substitution of the vinyl group on carbon 2 of heme B porphyrin ring with a hydroxyethyl farnesyl side group.</text>
</comment>
<comment type="catalytic activity">
    <reaction evidence="1">
        <text>heme b + (2E,6E)-farnesyl diphosphate + H2O = Fe(II)-heme o + diphosphate</text>
        <dbReference type="Rhea" id="RHEA:28070"/>
        <dbReference type="ChEBI" id="CHEBI:15377"/>
        <dbReference type="ChEBI" id="CHEBI:33019"/>
        <dbReference type="ChEBI" id="CHEBI:60344"/>
        <dbReference type="ChEBI" id="CHEBI:60530"/>
        <dbReference type="ChEBI" id="CHEBI:175763"/>
        <dbReference type="EC" id="2.5.1.141"/>
    </reaction>
</comment>
<comment type="pathway">
    <text evidence="1">Porphyrin-containing compound metabolism; heme O biosynthesis; heme O from protoheme: step 1/1.</text>
</comment>
<comment type="subcellular location">
    <subcellularLocation>
        <location evidence="1">Cell membrane</location>
        <topology evidence="1">Multi-pass membrane protein</topology>
    </subcellularLocation>
</comment>
<comment type="miscellaneous">
    <text evidence="1">Carbon 2 of the heme B porphyrin ring is defined according to the Fischer nomenclature.</text>
</comment>
<comment type="similarity">
    <text evidence="1">Belongs to the UbiA prenyltransferase family. Protoheme IX farnesyltransferase subfamily.</text>
</comment>
<organism>
    <name type="scientific">Mycobacterium tuberculosis (strain ATCC 25177 / H37Ra)</name>
    <dbReference type="NCBI Taxonomy" id="419947"/>
    <lineage>
        <taxon>Bacteria</taxon>
        <taxon>Bacillati</taxon>
        <taxon>Actinomycetota</taxon>
        <taxon>Actinomycetes</taxon>
        <taxon>Mycobacteriales</taxon>
        <taxon>Mycobacteriaceae</taxon>
        <taxon>Mycobacterium</taxon>
        <taxon>Mycobacterium tuberculosis complex</taxon>
    </lineage>
</organism>
<name>COXX_MYCTA</name>
<dbReference type="EC" id="2.5.1.141" evidence="1"/>
<dbReference type="EMBL" id="CP000611">
    <property type="protein sequence ID" value="ABQ73204.1"/>
    <property type="molecule type" value="Genomic_DNA"/>
</dbReference>
<dbReference type="RefSeq" id="WP_003898882.1">
    <property type="nucleotide sequence ID" value="NZ_CP016972.1"/>
</dbReference>
<dbReference type="SMR" id="A5U2F4"/>
<dbReference type="KEGG" id="mra:MRA_1460"/>
<dbReference type="eggNOG" id="COG0109">
    <property type="taxonomic scope" value="Bacteria"/>
</dbReference>
<dbReference type="HOGENOM" id="CLU_029631_0_1_11"/>
<dbReference type="UniPathway" id="UPA00834">
    <property type="reaction ID" value="UER00712"/>
</dbReference>
<dbReference type="Proteomes" id="UP000001988">
    <property type="component" value="Chromosome"/>
</dbReference>
<dbReference type="GO" id="GO:0005886">
    <property type="term" value="C:plasma membrane"/>
    <property type="evidence" value="ECO:0007669"/>
    <property type="project" value="UniProtKB-SubCell"/>
</dbReference>
<dbReference type="GO" id="GO:0008495">
    <property type="term" value="F:protoheme IX farnesyltransferase activity"/>
    <property type="evidence" value="ECO:0007669"/>
    <property type="project" value="UniProtKB-UniRule"/>
</dbReference>
<dbReference type="GO" id="GO:0048034">
    <property type="term" value="P:heme O biosynthetic process"/>
    <property type="evidence" value="ECO:0007669"/>
    <property type="project" value="UniProtKB-UniRule"/>
</dbReference>
<dbReference type="CDD" id="cd13957">
    <property type="entry name" value="PT_UbiA_Cox10"/>
    <property type="match status" value="1"/>
</dbReference>
<dbReference type="FunFam" id="1.10.357.140:FF:000001">
    <property type="entry name" value="Protoheme IX farnesyltransferase"/>
    <property type="match status" value="1"/>
</dbReference>
<dbReference type="Gene3D" id="1.10.357.140">
    <property type="entry name" value="UbiA prenyltransferase"/>
    <property type="match status" value="1"/>
</dbReference>
<dbReference type="HAMAP" id="MF_00154">
    <property type="entry name" value="CyoE_CtaB"/>
    <property type="match status" value="1"/>
</dbReference>
<dbReference type="InterPro" id="IPR006369">
    <property type="entry name" value="Protohaem_IX_farnesylTrfase"/>
</dbReference>
<dbReference type="InterPro" id="IPR000537">
    <property type="entry name" value="UbiA_prenyltransferase"/>
</dbReference>
<dbReference type="InterPro" id="IPR044878">
    <property type="entry name" value="UbiA_sf"/>
</dbReference>
<dbReference type="NCBIfam" id="TIGR01473">
    <property type="entry name" value="cyoE_ctaB"/>
    <property type="match status" value="1"/>
</dbReference>
<dbReference type="NCBIfam" id="NF003349">
    <property type="entry name" value="PRK04375.1-2"/>
    <property type="match status" value="1"/>
</dbReference>
<dbReference type="PANTHER" id="PTHR43448:SF7">
    <property type="entry name" value="4-HYDROXYBENZOATE SOLANESYLTRANSFERASE"/>
    <property type="match status" value="1"/>
</dbReference>
<dbReference type="PANTHER" id="PTHR43448">
    <property type="entry name" value="PROTOHEME IX FARNESYLTRANSFERASE, MITOCHONDRIAL"/>
    <property type="match status" value="1"/>
</dbReference>
<dbReference type="Pfam" id="PF01040">
    <property type="entry name" value="UbiA"/>
    <property type="match status" value="1"/>
</dbReference>
<gene>
    <name evidence="1" type="primary">ctaB</name>
    <name type="ordered locus">MRA_1460</name>
</gene>
<reference key="1">
    <citation type="journal article" date="2008" name="PLoS ONE">
        <title>Genetic basis of virulence attenuation revealed by comparative genomic analysis of Mycobacterium tuberculosis strain H37Ra versus H37Rv.</title>
        <authorList>
            <person name="Zheng H."/>
            <person name="Lu L."/>
            <person name="Wang B."/>
            <person name="Pu S."/>
            <person name="Zhang X."/>
            <person name="Zhu G."/>
            <person name="Shi W."/>
            <person name="Zhang L."/>
            <person name="Wang H."/>
            <person name="Wang S."/>
            <person name="Zhao G."/>
            <person name="Zhang Y."/>
        </authorList>
    </citation>
    <scope>NUCLEOTIDE SEQUENCE [LARGE SCALE GENOMIC DNA]</scope>
    <source>
        <strain>ATCC 25177 / H37Ra</strain>
    </source>
</reference>
<protein>
    <recommendedName>
        <fullName evidence="1">Protoheme IX farnesyltransferase</fullName>
        <ecNumber evidence="1">2.5.1.141</ecNumber>
    </recommendedName>
    <alternativeName>
        <fullName evidence="1">Heme B farnesyltransferase</fullName>
    </alternativeName>
    <alternativeName>
        <fullName evidence="1">Heme O synthase</fullName>
    </alternativeName>
</protein>
<sequence length="308" mass="33538">MNVRGRVAPRRVTGRAMSTLLAYLALTKPRVIELLLVTAIPAMLLADRGAIHPLLMLNTLVGGMMAAAGANTLNCVADADIDKVMKRTARRPLAREAVPTRNALALGLTLTVISFFWLWCATNLLAGVLALVTVAFYVFVYTLWLKRRTSQNVVWGGAAGCMPVMIGWSAITGTIAWPALAMFAIIFFWTPPHTWALAMRYKQDYQVAGVPMLPAVATERQVTKQILIYTWLTVAATLVLALATSWLYGAVALVAGGWFLTMAHQLYAGVRAGEPVRPLRLFLQSNNYLAVVFCALAVDSVIALPTLH</sequence>
<proteinExistence type="inferred from homology"/>